<evidence type="ECO:0000250" key="1"/>
<evidence type="ECO:0000250" key="2">
    <source>
        <dbReference type="UniProtKB" id="P27467"/>
    </source>
</evidence>
<evidence type="ECO:0000250" key="3">
    <source>
        <dbReference type="UniProtKB" id="P28026"/>
    </source>
</evidence>
<evidence type="ECO:0000250" key="4">
    <source>
        <dbReference type="UniProtKB" id="P56704"/>
    </source>
</evidence>
<evidence type="ECO:0000255" key="5"/>
<evidence type="ECO:0000305" key="6"/>
<protein>
    <recommendedName>
        <fullName>Protein Wnt-16</fullName>
    </recommendedName>
</protein>
<organism>
    <name type="scientific">Bos taurus</name>
    <name type="common">Bovine</name>
    <dbReference type="NCBI Taxonomy" id="9913"/>
    <lineage>
        <taxon>Eukaryota</taxon>
        <taxon>Metazoa</taxon>
        <taxon>Chordata</taxon>
        <taxon>Craniata</taxon>
        <taxon>Vertebrata</taxon>
        <taxon>Euteleostomi</taxon>
        <taxon>Mammalia</taxon>
        <taxon>Eutheria</taxon>
        <taxon>Laurasiatheria</taxon>
        <taxon>Artiodactyla</taxon>
        <taxon>Ruminantia</taxon>
        <taxon>Pecora</taxon>
        <taxon>Bovidae</taxon>
        <taxon>Bovinae</taxon>
        <taxon>Bos</taxon>
    </lineage>
</organism>
<proteinExistence type="evidence at transcript level"/>
<sequence length="362" mass="40440">MDRAALLGLSRLCALWAAVLALFPCGAQGNWMWLGIASFGVPEKLGCANLPLNSRQKELCKRKPYLLPSIREGARLGIQECRSQFRHERWNCLVAAASAPGTSPLFGYELSSGTKETAFIYAVMAAGLVHSVTRSCSAGNMTECSCDTTLQNGGSSSEGWHWGGCSDDVQYGMWFSRKFLDFPIKNTTAKESKVLLAMNLHNNEAGRQAVAKLMSLDCRCHGVSGSCAVKTCWKTMSSFEKIGHLLKDKYENSVQISDKIKRKMHRREKDQRKIPIRKDDLLYVNKSPNYCVEDKKLGIPGTQGRECNRTSEGADGCNLLCCGRGYNTHVVRHVERCECKFIWCCYVRCRRCESMTDVHTCK</sequence>
<dbReference type="EMBL" id="BT020824">
    <property type="protein sequence ID" value="AAX08841.1"/>
    <property type="molecule type" value="mRNA"/>
</dbReference>
<dbReference type="EMBL" id="BC119880">
    <property type="protein sequence ID" value="AAI19881.1"/>
    <property type="molecule type" value="mRNA"/>
</dbReference>
<dbReference type="RefSeq" id="NP_001014949.1">
    <property type="nucleotide sequence ID" value="NM_001014949.1"/>
</dbReference>
<dbReference type="SMR" id="Q5E9U6"/>
<dbReference type="FunCoup" id="Q5E9U6">
    <property type="interactions" value="306"/>
</dbReference>
<dbReference type="STRING" id="9913.ENSBTAP00000003825"/>
<dbReference type="GlyCosmos" id="Q5E9U6">
    <property type="glycosylation" value="3 sites, No reported glycans"/>
</dbReference>
<dbReference type="GlyGen" id="Q5E9U6">
    <property type="glycosylation" value="3 sites"/>
</dbReference>
<dbReference type="PaxDb" id="9913-ENSBTAP00000003825"/>
<dbReference type="GeneID" id="538627"/>
<dbReference type="KEGG" id="bta:538627"/>
<dbReference type="CTD" id="51384"/>
<dbReference type="eggNOG" id="KOG3913">
    <property type="taxonomic scope" value="Eukaryota"/>
</dbReference>
<dbReference type="HOGENOM" id="CLU_033039_1_0_1"/>
<dbReference type="InParanoid" id="Q5E9U6"/>
<dbReference type="OrthoDB" id="5945655at2759"/>
<dbReference type="TreeFam" id="TF105310"/>
<dbReference type="Proteomes" id="UP000009136">
    <property type="component" value="Unplaced"/>
</dbReference>
<dbReference type="GO" id="GO:0005615">
    <property type="term" value="C:extracellular space"/>
    <property type="evidence" value="ECO:0000318"/>
    <property type="project" value="GO_Central"/>
</dbReference>
<dbReference type="GO" id="GO:0005125">
    <property type="term" value="F:cytokine activity"/>
    <property type="evidence" value="ECO:0000318"/>
    <property type="project" value="GO_Central"/>
</dbReference>
<dbReference type="GO" id="GO:0005109">
    <property type="term" value="F:frizzled binding"/>
    <property type="evidence" value="ECO:0000318"/>
    <property type="project" value="GO_Central"/>
</dbReference>
<dbReference type="GO" id="GO:0060070">
    <property type="term" value="P:canonical Wnt signaling pathway"/>
    <property type="evidence" value="ECO:0000318"/>
    <property type="project" value="GO_Central"/>
</dbReference>
<dbReference type="GO" id="GO:0045165">
    <property type="term" value="P:cell fate commitment"/>
    <property type="evidence" value="ECO:0000318"/>
    <property type="project" value="GO_Central"/>
</dbReference>
<dbReference type="GO" id="GO:0030182">
    <property type="term" value="P:neuron differentiation"/>
    <property type="evidence" value="ECO:0000318"/>
    <property type="project" value="GO_Central"/>
</dbReference>
<dbReference type="CDD" id="cd19344">
    <property type="entry name" value="Wnt_Wnt16"/>
    <property type="match status" value="1"/>
</dbReference>
<dbReference type="FunFam" id="3.30.2460.20:FF:000001">
    <property type="entry name" value="Wnt homolog"/>
    <property type="match status" value="1"/>
</dbReference>
<dbReference type="Gene3D" id="3.30.2460.20">
    <property type="match status" value="1"/>
</dbReference>
<dbReference type="InterPro" id="IPR005817">
    <property type="entry name" value="Wnt"/>
</dbReference>
<dbReference type="InterPro" id="IPR013304">
    <property type="entry name" value="Wnt16"/>
</dbReference>
<dbReference type="InterPro" id="IPR043158">
    <property type="entry name" value="Wnt_C"/>
</dbReference>
<dbReference type="InterPro" id="IPR018161">
    <property type="entry name" value="Wnt_CS"/>
</dbReference>
<dbReference type="PANTHER" id="PTHR12027:SF70">
    <property type="entry name" value="PROTEIN WNT-16"/>
    <property type="match status" value="1"/>
</dbReference>
<dbReference type="PANTHER" id="PTHR12027">
    <property type="entry name" value="WNT RELATED"/>
    <property type="match status" value="1"/>
</dbReference>
<dbReference type="Pfam" id="PF00110">
    <property type="entry name" value="wnt"/>
    <property type="match status" value="1"/>
</dbReference>
<dbReference type="PRINTS" id="PR01895">
    <property type="entry name" value="WNT16PROTEIN"/>
</dbReference>
<dbReference type="PRINTS" id="PR01349">
    <property type="entry name" value="WNTPROTEIN"/>
</dbReference>
<dbReference type="SMART" id="SM00097">
    <property type="entry name" value="WNT1"/>
    <property type="match status" value="1"/>
</dbReference>
<dbReference type="PROSITE" id="PS00246">
    <property type="entry name" value="WNT1"/>
    <property type="match status" value="1"/>
</dbReference>
<gene>
    <name type="primary">WNT16</name>
</gene>
<feature type="signal peptide" evidence="5">
    <location>
        <begin position="1"/>
        <end position="29"/>
    </location>
</feature>
<feature type="chain" id="PRO_0000248068" description="Protein Wnt-16">
    <location>
        <begin position="30"/>
        <end position="362"/>
    </location>
</feature>
<feature type="lipid moiety-binding region" description="O-palmitoleoyl serine; by PORCN" evidence="4">
    <location>
        <position position="224"/>
    </location>
</feature>
<feature type="glycosylation site" description="N-linked (GlcNAc...) asparagine" evidence="5">
    <location>
        <position position="140"/>
    </location>
</feature>
<feature type="glycosylation site" description="N-linked (GlcNAc...) asparagine" evidence="5">
    <location>
        <position position="186"/>
    </location>
</feature>
<feature type="glycosylation site" description="N-linked (GlcNAc...) asparagine" evidence="5">
    <location>
        <position position="308"/>
    </location>
</feature>
<feature type="disulfide bond" evidence="3">
    <location>
        <begin position="81"/>
        <end position="92"/>
    </location>
</feature>
<feature type="disulfide bond" evidence="3">
    <location>
        <begin position="136"/>
        <end position="144"/>
    </location>
</feature>
<feature type="disulfide bond" evidence="3">
    <location>
        <begin position="146"/>
        <end position="165"/>
    </location>
</feature>
<feature type="disulfide bond" evidence="3">
    <location>
        <begin position="218"/>
        <end position="232"/>
    </location>
</feature>
<feature type="disulfide bond" evidence="3">
    <location>
        <begin position="220"/>
        <end position="227"/>
    </location>
</feature>
<feature type="disulfide bond" evidence="3">
    <location>
        <begin position="291"/>
        <end position="322"/>
    </location>
</feature>
<feature type="disulfide bond" evidence="3">
    <location>
        <begin position="307"/>
        <end position="317"/>
    </location>
</feature>
<feature type="disulfide bond" evidence="3">
    <location>
        <begin position="321"/>
        <end position="361"/>
    </location>
</feature>
<feature type="disulfide bond" evidence="3">
    <location>
        <begin position="337"/>
        <end position="352"/>
    </location>
</feature>
<feature type="disulfide bond" evidence="3">
    <location>
        <begin position="339"/>
        <end position="349"/>
    </location>
</feature>
<feature type="disulfide bond" evidence="3">
    <location>
        <begin position="344"/>
        <end position="345"/>
    </location>
</feature>
<feature type="sequence conflict" description="In Ref. 2; AAI19881." evidence="6" ref="2">
    <original>S</original>
    <variation>A</variation>
    <location>
        <position position="156"/>
    </location>
</feature>
<accession>Q5E9U6</accession>
<accession>Q0VD20</accession>
<comment type="function">
    <text evidence="1">Ligand for members of the frizzled family of seven transmembrane receptors. Probable developmental protein. May be a signaling molecule which affects the development of discrete regions of tissues. Is likely to signal over only few cell diameters (By similarity).</text>
</comment>
<comment type="subcellular location">
    <subcellularLocation>
        <location evidence="1">Secreted</location>
        <location evidence="1">Extracellular space</location>
        <location evidence="1">Extracellular matrix</location>
    </subcellularLocation>
</comment>
<comment type="PTM">
    <text evidence="2 4">Palmitoleoylation is required for efficient binding to frizzled receptors. Depalmitoleoylation leads to Wnt signaling pathway inhibition.</text>
</comment>
<comment type="similarity">
    <text evidence="6">Belongs to the Wnt family.</text>
</comment>
<reference key="1">
    <citation type="journal article" date="2005" name="BMC Genomics">
        <title>Characterization of 954 bovine full-CDS cDNA sequences.</title>
        <authorList>
            <person name="Harhay G.P."/>
            <person name="Sonstegard T.S."/>
            <person name="Keele J.W."/>
            <person name="Heaton M.P."/>
            <person name="Clawson M.L."/>
            <person name="Snelling W.M."/>
            <person name="Wiedmann R.T."/>
            <person name="Van Tassell C.P."/>
            <person name="Smith T.P.L."/>
        </authorList>
    </citation>
    <scope>NUCLEOTIDE SEQUENCE [LARGE SCALE MRNA]</scope>
</reference>
<reference key="2">
    <citation type="submission" date="2006-08" db="EMBL/GenBank/DDBJ databases">
        <authorList>
            <consortium name="NIH - Mammalian Gene Collection (MGC) project"/>
        </authorList>
    </citation>
    <scope>NUCLEOTIDE SEQUENCE [LARGE SCALE MRNA]</scope>
    <source>
        <strain>Hereford</strain>
        <tissue>Thalamus</tissue>
    </source>
</reference>
<keyword id="KW-0217">Developmental protein</keyword>
<keyword id="KW-1015">Disulfide bond</keyword>
<keyword id="KW-0272">Extracellular matrix</keyword>
<keyword id="KW-0325">Glycoprotein</keyword>
<keyword id="KW-0449">Lipoprotein</keyword>
<keyword id="KW-1185">Reference proteome</keyword>
<keyword id="KW-0964">Secreted</keyword>
<keyword id="KW-0732">Signal</keyword>
<keyword id="KW-0879">Wnt signaling pathway</keyword>
<name>WNT16_BOVIN</name>